<name>AZOR1_CUPPJ</name>
<evidence type="ECO:0000255" key="1">
    <source>
        <dbReference type="HAMAP-Rule" id="MF_01216"/>
    </source>
</evidence>
<dbReference type="EC" id="1.6.5.-" evidence="1"/>
<dbReference type="EC" id="1.7.1.17" evidence="1"/>
<dbReference type="EMBL" id="CP000090">
    <property type="protein sequence ID" value="AAZ60811.1"/>
    <property type="molecule type" value="Genomic_DNA"/>
</dbReference>
<dbReference type="SMR" id="Q471X2"/>
<dbReference type="STRING" id="264198.Reut_A1441"/>
<dbReference type="KEGG" id="reu:Reut_A1441"/>
<dbReference type="eggNOG" id="COG1182">
    <property type="taxonomic scope" value="Bacteria"/>
</dbReference>
<dbReference type="HOGENOM" id="CLU_088964_0_0_4"/>
<dbReference type="OrthoDB" id="9787136at2"/>
<dbReference type="GO" id="GO:0009055">
    <property type="term" value="F:electron transfer activity"/>
    <property type="evidence" value="ECO:0007669"/>
    <property type="project" value="UniProtKB-UniRule"/>
</dbReference>
<dbReference type="GO" id="GO:0010181">
    <property type="term" value="F:FMN binding"/>
    <property type="evidence" value="ECO:0007669"/>
    <property type="project" value="UniProtKB-UniRule"/>
</dbReference>
<dbReference type="GO" id="GO:0016652">
    <property type="term" value="F:oxidoreductase activity, acting on NAD(P)H as acceptor"/>
    <property type="evidence" value="ECO:0007669"/>
    <property type="project" value="UniProtKB-UniRule"/>
</dbReference>
<dbReference type="GO" id="GO:0016655">
    <property type="term" value="F:oxidoreductase activity, acting on NAD(P)H, quinone or similar compound as acceptor"/>
    <property type="evidence" value="ECO:0007669"/>
    <property type="project" value="InterPro"/>
</dbReference>
<dbReference type="Gene3D" id="3.40.50.360">
    <property type="match status" value="1"/>
</dbReference>
<dbReference type="HAMAP" id="MF_01216">
    <property type="entry name" value="Azoreductase_type1"/>
    <property type="match status" value="1"/>
</dbReference>
<dbReference type="InterPro" id="IPR003680">
    <property type="entry name" value="Flavodoxin_fold"/>
</dbReference>
<dbReference type="InterPro" id="IPR029039">
    <property type="entry name" value="Flavoprotein-like_sf"/>
</dbReference>
<dbReference type="InterPro" id="IPR050104">
    <property type="entry name" value="FMN-dep_NADH:Q_OxRdtase_AzoR1"/>
</dbReference>
<dbReference type="InterPro" id="IPR023048">
    <property type="entry name" value="NADH:quinone_OxRdtase_FMN_depd"/>
</dbReference>
<dbReference type="PANTHER" id="PTHR43741">
    <property type="entry name" value="FMN-DEPENDENT NADH-AZOREDUCTASE 1"/>
    <property type="match status" value="1"/>
</dbReference>
<dbReference type="PANTHER" id="PTHR43741:SF4">
    <property type="entry name" value="FMN-DEPENDENT NADH:QUINONE OXIDOREDUCTASE"/>
    <property type="match status" value="1"/>
</dbReference>
<dbReference type="Pfam" id="PF02525">
    <property type="entry name" value="Flavodoxin_2"/>
    <property type="match status" value="1"/>
</dbReference>
<dbReference type="SUPFAM" id="SSF52218">
    <property type="entry name" value="Flavoproteins"/>
    <property type="match status" value="1"/>
</dbReference>
<protein>
    <recommendedName>
        <fullName evidence="1">FMN-dependent NADH:quinone oxidoreductase 1</fullName>
        <ecNumber evidence="1">1.6.5.-</ecNumber>
    </recommendedName>
    <alternativeName>
        <fullName evidence="1">Azo-dye reductase 1</fullName>
    </alternativeName>
    <alternativeName>
        <fullName evidence="1">FMN-dependent NADH-azo compound oxidoreductase 1</fullName>
    </alternativeName>
    <alternativeName>
        <fullName evidence="1">FMN-dependent NADH-azoreductase 1</fullName>
        <ecNumber evidence="1">1.7.1.17</ecNumber>
    </alternativeName>
</protein>
<feature type="chain" id="PRO_0000245958" description="FMN-dependent NADH:quinone oxidoreductase 1">
    <location>
        <begin position="1"/>
        <end position="206"/>
    </location>
</feature>
<feature type="binding site" evidence="1">
    <location>
        <position position="9"/>
    </location>
    <ligand>
        <name>FMN</name>
        <dbReference type="ChEBI" id="CHEBI:58210"/>
    </ligand>
</feature>
<feature type="binding site" evidence="1">
    <location>
        <begin position="15"/>
        <end position="17"/>
    </location>
    <ligand>
        <name>FMN</name>
        <dbReference type="ChEBI" id="CHEBI:58210"/>
    </ligand>
</feature>
<feature type="binding site" evidence="1">
    <location>
        <begin position="139"/>
        <end position="142"/>
    </location>
    <ligand>
        <name>FMN</name>
        <dbReference type="ChEBI" id="CHEBI:58210"/>
    </ligand>
</feature>
<reference key="1">
    <citation type="journal article" date="2010" name="PLoS ONE">
        <title>The complete multipartite genome sequence of Cupriavidus necator JMP134, a versatile pollutant degrader.</title>
        <authorList>
            <person name="Lykidis A."/>
            <person name="Perez-Pantoja D."/>
            <person name="Ledger T."/>
            <person name="Mavromatis K."/>
            <person name="Anderson I.J."/>
            <person name="Ivanova N.N."/>
            <person name="Hooper S.D."/>
            <person name="Lapidus A."/>
            <person name="Lucas S."/>
            <person name="Gonzalez B."/>
            <person name="Kyrpides N.C."/>
        </authorList>
    </citation>
    <scope>NUCLEOTIDE SEQUENCE [LARGE SCALE GENOMIC DNA]</scope>
    <source>
        <strain>JMP134 / LMG 1197</strain>
    </source>
</reference>
<sequence>MNILQIDSSVLGGHSVSRNLTASVVADLVAANPGAKVTVRDLDQDAPAHLSGHLLPVLGGPKDGLNAAQEAELQRTETWLAEFLAADVLVVGVPQYNFSIPSQLKSWIDRIAQAGRTFKYTENGPVGLAGGKRVIVVSSRGGVRQDANELDLHEKTVDVVFRFLGITDITYVRAHGLAMGPDAREAGLSSARTEIAALNDGGRLAA</sequence>
<comment type="function">
    <text evidence="1">Quinone reductase that provides resistance to thiol-specific stress caused by electrophilic quinones.</text>
</comment>
<comment type="function">
    <text evidence="1">Also exhibits azoreductase activity. Catalyzes the reductive cleavage of the azo bond in aromatic azo compounds to the corresponding amines.</text>
</comment>
<comment type="catalytic activity">
    <reaction evidence="1">
        <text>2 a quinone + NADH + H(+) = 2 a 1,4-benzosemiquinone + NAD(+)</text>
        <dbReference type="Rhea" id="RHEA:65952"/>
        <dbReference type="ChEBI" id="CHEBI:15378"/>
        <dbReference type="ChEBI" id="CHEBI:57540"/>
        <dbReference type="ChEBI" id="CHEBI:57945"/>
        <dbReference type="ChEBI" id="CHEBI:132124"/>
        <dbReference type="ChEBI" id="CHEBI:134225"/>
    </reaction>
</comment>
<comment type="catalytic activity">
    <reaction evidence="1">
        <text>N,N-dimethyl-1,4-phenylenediamine + anthranilate + 2 NAD(+) = 2-(4-dimethylaminophenyl)diazenylbenzoate + 2 NADH + 2 H(+)</text>
        <dbReference type="Rhea" id="RHEA:55872"/>
        <dbReference type="ChEBI" id="CHEBI:15378"/>
        <dbReference type="ChEBI" id="CHEBI:15783"/>
        <dbReference type="ChEBI" id="CHEBI:16567"/>
        <dbReference type="ChEBI" id="CHEBI:57540"/>
        <dbReference type="ChEBI" id="CHEBI:57945"/>
        <dbReference type="ChEBI" id="CHEBI:71579"/>
        <dbReference type="EC" id="1.7.1.17"/>
    </reaction>
</comment>
<comment type="cofactor">
    <cofactor evidence="1">
        <name>FMN</name>
        <dbReference type="ChEBI" id="CHEBI:58210"/>
    </cofactor>
    <text evidence="1">Binds 1 FMN per subunit.</text>
</comment>
<comment type="subunit">
    <text evidence="1">Homodimer.</text>
</comment>
<comment type="similarity">
    <text evidence="1">Belongs to the azoreductase type 1 family.</text>
</comment>
<organism>
    <name type="scientific">Cupriavidus pinatubonensis (strain JMP 134 / LMG 1197)</name>
    <name type="common">Cupriavidus necator (strain JMP 134)</name>
    <dbReference type="NCBI Taxonomy" id="264198"/>
    <lineage>
        <taxon>Bacteria</taxon>
        <taxon>Pseudomonadati</taxon>
        <taxon>Pseudomonadota</taxon>
        <taxon>Betaproteobacteria</taxon>
        <taxon>Burkholderiales</taxon>
        <taxon>Burkholderiaceae</taxon>
        <taxon>Cupriavidus</taxon>
    </lineage>
</organism>
<keyword id="KW-0285">Flavoprotein</keyword>
<keyword id="KW-0288">FMN</keyword>
<keyword id="KW-0520">NAD</keyword>
<keyword id="KW-0560">Oxidoreductase</keyword>
<accession>Q471X2</accession>
<proteinExistence type="inferred from homology"/>
<gene>
    <name evidence="1" type="primary">azoR1</name>
    <name type="ordered locus">Reut_A1441</name>
</gene>